<name>RS15_THEAC</name>
<comment type="subunit">
    <text evidence="1">Part of the 30S ribosomal subunit.</text>
</comment>
<comment type="similarity">
    <text evidence="1">Belongs to the universal ribosomal protein uS15 family.</text>
</comment>
<keyword id="KW-1185">Reference proteome</keyword>
<keyword id="KW-0687">Ribonucleoprotein</keyword>
<keyword id="KW-0689">Ribosomal protein</keyword>
<dbReference type="EMBL" id="AL445066">
    <property type="protein sequence ID" value="CAC12257.1"/>
    <property type="molecule type" value="Genomic_DNA"/>
</dbReference>
<dbReference type="RefSeq" id="WP_010901540.1">
    <property type="nucleotide sequence ID" value="NC_002578.1"/>
</dbReference>
<dbReference type="SMR" id="Q9HJ42"/>
<dbReference type="FunCoup" id="Q9HJ42">
    <property type="interactions" value="166"/>
</dbReference>
<dbReference type="STRING" id="273075.gene:9572353"/>
<dbReference type="PaxDb" id="273075-Ta1131"/>
<dbReference type="EnsemblBacteria" id="CAC12257">
    <property type="protein sequence ID" value="CAC12257"/>
    <property type="gene ID" value="CAC12257"/>
</dbReference>
<dbReference type="KEGG" id="tac:Ta1131"/>
<dbReference type="eggNOG" id="arCOG04185">
    <property type="taxonomic scope" value="Archaea"/>
</dbReference>
<dbReference type="HOGENOM" id="CLU_090139_2_0_2"/>
<dbReference type="InParanoid" id="Q9HJ42"/>
<dbReference type="OrthoDB" id="6533at2157"/>
<dbReference type="Proteomes" id="UP000001024">
    <property type="component" value="Chromosome"/>
</dbReference>
<dbReference type="GO" id="GO:0022627">
    <property type="term" value="C:cytosolic small ribosomal subunit"/>
    <property type="evidence" value="ECO:0007669"/>
    <property type="project" value="TreeGrafter"/>
</dbReference>
<dbReference type="GO" id="GO:0070181">
    <property type="term" value="F:small ribosomal subunit rRNA binding"/>
    <property type="evidence" value="ECO:0007669"/>
    <property type="project" value="TreeGrafter"/>
</dbReference>
<dbReference type="GO" id="GO:0003735">
    <property type="term" value="F:structural constituent of ribosome"/>
    <property type="evidence" value="ECO:0007669"/>
    <property type="project" value="InterPro"/>
</dbReference>
<dbReference type="GO" id="GO:0006412">
    <property type="term" value="P:translation"/>
    <property type="evidence" value="ECO:0007669"/>
    <property type="project" value="UniProtKB-UniRule"/>
</dbReference>
<dbReference type="CDD" id="cd00353">
    <property type="entry name" value="Ribosomal_S15p_S13e"/>
    <property type="match status" value="1"/>
</dbReference>
<dbReference type="Gene3D" id="4.10.860.130">
    <property type="match status" value="1"/>
</dbReference>
<dbReference type="Gene3D" id="1.10.287.10">
    <property type="entry name" value="S15/NS1, RNA-binding"/>
    <property type="match status" value="1"/>
</dbReference>
<dbReference type="HAMAP" id="MF_01343_A">
    <property type="entry name" value="Ribosomal_uS15_A"/>
    <property type="match status" value="1"/>
</dbReference>
<dbReference type="InterPro" id="IPR000589">
    <property type="entry name" value="Ribosomal_uS15"/>
</dbReference>
<dbReference type="InterPro" id="IPR023029">
    <property type="entry name" value="Ribosomal_uS15_arc_euk"/>
</dbReference>
<dbReference type="InterPro" id="IPR012606">
    <property type="entry name" value="Ribosomal_uS15_N"/>
</dbReference>
<dbReference type="InterPro" id="IPR009068">
    <property type="entry name" value="uS15_NS1_RNA-bd_sf"/>
</dbReference>
<dbReference type="NCBIfam" id="NF006331">
    <property type="entry name" value="PRK08561.1"/>
    <property type="match status" value="1"/>
</dbReference>
<dbReference type="PANTHER" id="PTHR11885">
    <property type="entry name" value="RIBOSOMAL PROTEIN S15P/S13E"/>
    <property type="match status" value="1"/>
</dbReference>
<dbReference type="PANTHER" id="PTHR11885:SF6">
    <property type="entry name" value="SMALL RIBOSOMAL SUBUNIT PROTEIN US15"/>
    <property type="match status" value="1"/>
</dbReference>
<dbReference type="Pfam" id="PF08069">
    <property type="entry name" value="Ribosomal_S13_N"/>
    <property type="match status" value="1"/>
</dbReference>
<dbReference type="Pfam" id="PF00312">
    <property type="entry name" value="Ribosomal_S15"/>
    <property type="match status" value="1"/>
</dbReference>
<dbReference type="SMART" id="SM01386">
    <property type="entry name" value="Ribosomal_S13_N"/>
    <property type="match status" value="1"/>
</dbReference>
<dbReference type="SMART" id="SM01387">
    <property type="entry name" value="Ribosomal_S15"/>
    <property type="match status" value="1"/>
</dbReference>
<dbReference type="SUPFAM" id="SSF47060">
    <property type="entry name" value="S15/NS1 RNA-binding domain"/>
    <property type="match status" value="1"/>
</dbReference>
<reference key="1">
    <citation type="journal article" date="2000" name="Nature">
        <title>The genome sequence of the thermoacidophilic scavenger Thermoplasma acidophilum.</title>
        <authorList>
            <person name="Ruepp A."/>
            <person name="Graml W."/>
            <person name="Santos-Martinez M.-L."/>
            <person name="Koretke K.K."/>
            <person name="Volker C."/>
            <person name="Mewes H.-W."/>
            <person name="Frishman D."/>
            <person name="Stocker S."/>
            <person name="Lupas A.N."/>
            <person name="Baumeister W."/>
        </authorList>
    </citation>
    <scope>NUCLEOTIDE SEQUENCE [LARGE SCALE GENOMIC DNA]</scope>
    <source>
        <strain>ATCC 25905 / DSM 1728 / JCM 9062 / NBRC 15155 / AMRC-C165</strain>
    </source>
</reference>
<proteinExistence type="inferred from homology"/>
<feature type="chain" id="PRO_0000115623" description="Small ribosomal subunit protein uS15">
    <location>
        <begin position="1"/>
        <end position="145"/>
    </location>
</feature>
<protein>
    <recommendedName>
        <fullName evidence="1">Small ribosomal subunit protein uS15</fullName>
    </recommendedName>
    <alternativeName>
        <fullName evidence="2">30S ribosomal protein S15</fullName>
    </alternativeName>
</protein>
<evidence type="ECO:0000255" key="1">
    <source>
        <dbReference type="HAMAP-Rule" id="MF_01343"/>
    </source>
</evidence>
<evidence type="ECO:0000305" key="2"/>
<accession>Q9HJ42</accession>
<organism>
    <name type="scientific">Thermoplasma acidophilum (strain ATCC 25905 / DSM 1728 / JCM 9062 / NBRC 15155 / AMRC-C165)</name>
    <dbReference type="NCBI Taxonomy" id="273075"/>
    <lineage>
        <taxon>Archaea</taxon>
        <taxon>Methanobacteriati</taxon>
        <taxon>Thermoplasmatota</taxon>
        <taxon>Thermoplasmata</taxon>
        <taxon>Thermoplasmatales</taxon>
        <taxon>Thermoplasmataceae</taxon>
        <taxon>Thermoplasma</taxon>
    </lineage>
</organism>
<gene>
    <name evidence="1" type="primary">rps15</name>
    <name type="ordered locus">Ta1131</name>
</gene>
<sequence>MARMHTRKRGRSGSKKVYGVQPSWIQYSKDEVINTIVNLKKSGVPPSVIGIKLRDQYGIPTVKAVLGMKLGKVLSEKGLKDDVPEDLGNLIKRYNNVAKHVELNPKDQANKRGRDLIMAKMLRLVKYYKRTGVLDEKWNLSKVLR</sequence>